<feature type="chain" id="PRO_0000049767" description="Uncharacterized protein YqbP">
    <location>
        <begin position="1"/>
        <end position="219"/>
    </location>
</feature>
<feature type="domain" description="LysM" evidence="1">
    <location>
        <begin position="159"/>
        <end position="217"/>
    </location>
</feature>
<feature type="region of interest" description="Disordered" evidence="2">
    <location>
        <begin position="139"/>
        <end position="160"/>
    </location>
</feature>
<feature type="compositionally biased region" description="Basic residues" evidence="2">
    <location>
        <begin position="139"/>
        <end position="154"/>
    </location>
</feature>
<dbReference type="EMBL" id="D32216">
    <property type="protein sequence ID" value="BAA06948.1"/>
    <property type="molecule type" value="Genomic_DNA"/>
</dbReference>
<dbReference type="EMBL" id="D84432">
    <property type="protein sequence ID" value="BAA12412.1"/>
    <property type="molecule type" value="Genomic_DNA"/>
</dbReference>
<dbReference type="EMBL" id="AL009126">
    <property type="protein sequence ID" value="CAB14543.1"/>
    <property type="molecule type" value="Genomic_DNA"/>
</dbReference>
<dbReference type="PIR" id="C69948">
    <property type="entry name" value="C69948"/>
</dbReference>
<dbReference type="RefSeq" id="NP_390479.1">
    <property type="nucleotide sequence ID" value="NC_000964.3"/>
</dbReference>
<dbReference type="RefSeq" id="WP_004398548.1">
    <property type="nucleotide sequence ID" value="NZ_OZ025638.1"/>
</dbReference>
<dbReference type="SMR" id="P45932"/>
<dbReference type="FunCoup" id="P45932">
    <property type="interactions" value="80"/>
</dbReference>
<dbReference type="IntAct" id="P45932">
    <property type="interactions" value="1"/>
</dbReference>
<dbReference type="STRING" id="224308.BSU26020"/>
<dbReference type="PaxDb" id="224308-BSU26020"/>
<dbReference type="EnsemblBacteria" id="CAB14543">
    <property type="protein sequence ID" value="CAB14543"/>
    <property type="gene ID" value="BSU_26020"/>
</dbReference>
<dbReference type="GeneID" id="937756"/>
<dbReference type="KEGG" id="bsu:BSU26020"/>
<dbReference type="PATRIC" id="fig|224308.179.peg.2827"/>
<dbReference type="eggNOG" id="COG1652">
    <property type="taxonomic scope" value="Bacteria"/>
</dbReference>
<dbReference type="InParanoid" id="P45932"/>
<dbReference type="OrthoDB" id="9800780at2"/>
<dbReference type="PhylomeDB" id="P45932"/>
<dbReference type="BioCyc" id="BSUB:BSU26020-MONOMER"/>
<dbReference type="Proteomes" id="UP000001570">
    <property type="component" value="Chromosome"/>
</dbReference>
<dbReference type="CDD" id="cd00118">
    <property type="entry name" value="LysM"/>
    <property type="match status" value="1"/>
</dbReference>
<dbReference type="Gene3D" id="3.10.350.10">
    <property type="entry name" value="LysM domain"/>
    <property type="match status" value="1"/>
</dbReference>
<dbReference type="InterPro" id="IPR052196">
    <property type="entry name" value="Bact_Kbp"/>
</dbReference>
<dbReference type="InterPro" id="IPR018392">
    <property type="entry name" value="LysM_dom"/>
</dbReference>
<dbReference type="InterPro" id="IPR036779">
    <property type="entry name" value="LysM_dom_sf"/>
</dbReference>
<dbReference type="PANTHER" id="PTHR34700:SF4">
    <property type="entry name" value="PHAGE-LIKE ELEMENT PBSX PROTEIN XKDP"/>
    <property type="match status" value="1"/>
</dbReference>
<dbReference type="PANTHER" id="PTHR34700">
    <property type="entry name" value="POTASSIUM BINDING PROTEIN KBP"/>
    <property type="match status" value="1"/>
</dbReference>
<dbReference type="Pfam" id="PF01476">
    <property type="entry name" value="LysM"/>
    <property type="match status" value="1"/>
</dbReference>
<dbReference type="SMART" id="SM00257">
    <property type="entry name" value="LysM"/>
    <property type="match status" value="1"/>
</dbReference>
<dbReference type="SUPFAM" id="SSF54106">
    <property type="entry name" value="LysM domain"/>
    <property type="match status" value="1"/>
</dbReference>
<dbReference type="PROSITE" id="PS51782">
    <property type="entry name" value="LYSM"/>
    <property type="match status" value="1"/>
</dbReference>
<gene>
    <name type="primary">yqbP</name>
    <name type="ordered locus">BSU26020</name>
</gene>
<organism>
    <name type="scientific">Bacillus subtilis (strain 168)</name>
    <dbReference type="NCBI Taxonomy" id="224308"/>
    <lineage>
        <taxon>Bacteria</taxon>
        <taxon>Bacillati</taxon>
        <taxon>Bacillota</taxon>
        <taxon>Bacilli</taxon>
        <taxon>Bacillales</taxon>
        <taxon>Bacillaceae</taxon>
        <taxon>Bacillus</taxon>
    </lineage>
</organism>
<evidence type="ECO:0000255" key="1">
    <source>
        <dbReference type="PROSITE-ProRule" id="PRU01118"/>
    </source>
</evidence>
<evidence type="ECO:0000256" key="2">
    <source>
        <dbReference type="SAM" id="MobiDB-lite"/>
    </source>
</evidence>
<keyword id="KW-1185">Reference proteome</keyword>
<name>YQBP_BACSU</name>
<proteinExistence type="predicted"/>
<reference key="1">
    <citation type="journal article" date="1995" name="Microbiology">
        <title>Complete nucleotide sequence of a skin element excised by DNA rearrangement during sporulation in Bacillus subtilis.</title>
        <authorList>
            <person name="Takemaru K."/>
            <person name="Mizuno M."/>
            <person name="Sato T."/>
            <person name="Takeuchi M."/>
            <person name="Kobayashi Y."/>
        </authorList>
    </citation>
    <scope>NUCLEOTIDE SEQUENCE [GENOMIC DNA]</scope>
    <source>
        <strain>168 / JH642</strain>
    </source>
</reference>
<reference key="2">
    <citation type="journal article" date="1996" name="Microbiology">
        <title>Systematic sequencing of the 283 kb 210 degrees-232 degrees region of the Bacillus subtilis genome containing the skin element and many sporulation genes.</title>
        <authorList>
            <person name="Mizuno M."/>
            <person name="Masuda S."/>
            <person name="Takemaru K."/>
            <person name="Hosono S."/>
            <person name="Sato T."/>
            <person name="Takeuchi M."/>
            <person name="Kobayashi Y."/>
        </authorList>
    </citation>
    <scope>NUCLEOTIDE SEQUENCE [GENOMIC DNA]</scope>
    <source>
        <strain>168 / JH642</strain>
    </source>
</reference>
<reference key="3">
    <citation type="journal article" date="1997" name="Nature">
        <title>The complete genome sequence of the Gram-positive bacterium Bacillus subtilis.</title>
        <authorList>
            <person name="Kunst F."/>
            <person name="Ogasawara N."/>
            <person name="Moszer I."/>
            <person name="Albertini A.M."/>
            <person name="Alloni G."/>
            <person name="Azevedo V."/>
            <person name="Bertero M.G."/>
            <person name="Bessieres P."/>
            <person name="Bolotin A."/>
            <person name="Borchert S."/>
            <person name="Borriss R."/>
            <person name="Boursier L."/>
            <person name="Brans A."/>
            <person name="Braun M."/>
            <person name="Brignell S.C."/>
            <person name="Bron S."/>
            <person name="Brouillet S."/>
            <person name="Bruschi C.V."/>
            <person name="Caldwell B."/>
            <person name="Capuano V."/>
            <person name="Carter N.M."/>
            <person name="Choi S.-K."/>
            <person name="Codani J.-J."/>
            <person name="Connerton I.F."/>
            <person name="Cummings N.J."/>
            <person name="Daniel R.A."/>
            <person name="Denizot F."/>
            <person name="Devine K.M."/>
            <person name="Duesterhoeft A."/>
            <person name="Ehrlich S.D."/>
            <person name="Emmerson P.T."/>
            <person name="Entian K.-D."/>
            <person name="Errington J."/>
            <person name="Fabret C."/>
            <person name="Ferrari E."/>
            <person name="Foulger D."/>
            <person name="Fritz C."/>
            <person name="Fujita M."/>
            <person name="Fujita Y."/>
            <person name="Fuma S."/>
            <person name="Galizzi A."/>
            <person name="Galleron N."/>
            <person name="Ghim S.-Y."/>
            <person name="Glaser P."/>
            <person name="Goffeau A."/>
            <person name="Golightly E.J."/>
            <person name="Grandi G."/>
            <person name="Guiseppi G."/>
            <person name="Guy B.J."/>
            <person name="Haga K."/>
            <person name="Haiech J."/>
            <person name="Harwood C.R."/>
            <person name="Henaut A."/>
            <person name="Hilbert H."/>
            <person name="Holsappel S."/>
            <person name="Hosono S."/>
            <person name="Hullo M.-F."/>
            <person name="Itaya M."/>
            <person name="Jones L.-M."/>
            <person name="Joris B."/>
            <person name="Karamata D."/>
            <person name="Kasahara Y."/>
            <person name="Klaerr-Blanchard M."/>
            <person name="Klein C."/>
            <person name="Kobayashi Y."/>
            <person name="Koetter P."/>
            <person name="Koningstein G."/>
            <person name="Krogh S."/>
            <person name="Kumano M."/>
            <person name="Kurita K."/>
            <person name="Lapidus A."/>
            <person name="Lardinois S."/>
            <person name="Lauber J."/>
            <person name="Lazarevic V."/>
            <person name="Lee S.-M."/>
            <person name="Levine A."/>
            <person name="Liu H."/>
            <person name="Masuda S."/>
            <person name="Mauel C."/>
            <person name="Medigue C."/>
            <person name="Medina N."/>
            <person name="Mellado R.P."/>
            <person name="Mizuno M."/>
            <person name="Moestl D."/>
            <person name="Nakai S."/>
            <person name="Noback M."/>
            <person name="Noone D."/>
            <person name="O'Reilly M."/>
            <person name="Ogawa K."/>
            <person name="Ogiwara A."/>
            <person name="Oudega B."/>
            <person name="Park S.-H."/>
            <person name="Parro V."/>
            <person name="Pohl T.M."/>
            <person name="Portetelle D."/>
            <person name="Porwollik S."/>
            <person name="Prescott A.M."/>
            <person name="Presecan E."/>
            <person name="Pujic P."/>
            <person name="Purnelle B."/>
            <person name="Rapoport G."/>
            <person name="Rey M."/>
            <person name="Reynolds S."/>
            <person name="Rieger M."/>
            <person name="Rivolta C."/>
            <person name="Rocha E."/>
            <person name="Roche B."/>
            <person name="Rose M."/>
            <person name="Sadaie Y."/>
            <person name="Sato T."/>
            <person name="Scanlan E."/>
            <person name="Schleich S."/>
            <person name="Schroeter R."/>
            <person name="Scoffone F."/>
            <person name="Sekiguchi J."/>
            <person name="Sekowska A."/>
            <person name="Seror S.J."/>
            <person name="Serror P."/>
            <person name="Shin B.-S."/>
            <person name="Soldo B."/>
            <person name="Sorokin A."/>
            <person name="Tacconi E."/>
            <person name="Takagi T."/>
            <person name="Takahashi H."/>
            <person name="Takemaru K."/>
            <person name="Takeuchi M."/>
            <person name="Tamakoshi A."/>
            <person name="Tanaka T."/>
            <person name="Terpstra P."/>
            <person name="Tognoni A."/>
            <person name="Tosato V."/>
            <person name="Uchiyama S."/>
            <person name="Vandenbol M."/>
            <person name="Vannier F."/>
            <person name="Vassarotti A."/>
            <person name="Viari A."/>
            <person name="Wambutt R."/>
            <person name="Wedler E."/>
            <person name="Wedler H."/>
            <person name="Weitzenegger T."/>
            <person name="Winters P."/>
            <person name="Wipat A."/>
            <person name="Yamamoto H."/>
            <person name="Yamane K."/>
            <person name="Yasumoto K."/>
            <person name="Yata K."/>
            <person name="Yoshida K."/>
            <person name="Yoshikawa H.-F."/>
            <person name="Zumstein E."/>
            <person name="Yoshikawa H."/>
            <person name="Danchin A."/>
        </authorList>
    </citation>
    <scope>NUCLEOTIDE SEQUENCE [LARGE SCALE GENOMIC DNA]</scope>
    <source>
        <strain>168</strain>
    </source>
</reference>
<reference key="4">
    <citation type="journal article" date="1995" name="Gene">
        <title>Analysis of a Bacillus subtilis genome fragment using a co-operative computer system prototype.</title>
        <authorList>
            <person name="Medigue C."/>
            <person name="Moszer I."/>
            <person name="Viari A."/>
            <person name="Danchin A."/>
        </authorList>
    </citation>
    <scope>IDENTIFICATION</scope>
</reference>
<protein>
    <recommendedName>
        <fullName>Uncharacterized protein YqbP</fullName>
    </recommendedName>
</protein>
<accession>P45932</accession>
<sequence>MTKSIYEFWISQGKDKLRLPVLPEQIDISNTIQNESVKVASFGEITFIDKPGAKEISFSSFFPKKHSPLAEYKGFPSPENAIAKIEKWVKSKKPVQFLITGTKINLTCSIEVFSYTEGQKDIGDRDYEIKLKEYKTASPRKIKQKKKTKKKRPSKSAPKTYTVKKGDTLWDLAGKFYGDSTKWRKIWKVNKKAMIKRSKRNIRQPGHWIFPGQKLKIPQ</sequence>